<sequence>MGRTLENKQQIVGELKELLADAELALVLDFKGLSIKEMSDLRDRLRASDSVCKVTKNTLMRRAIDGDSNWASLDSLLTGTNAFVLVKGDVGAGVKAVQTFQKELKKSETKGGLFEGKLLSQDEIKAIADLPSKEQLMAQIAGAINAVATKVAVGINEVPSGMARALKQHAEGGEG</sequence>
<protein>
    <recommendedName>
        <fullName evidence="1">Large ribosomal subunit protein uL10</fullName>
    </recommendedName>
    <alternativeName>
        <fullName evidence="2">50S ribosomal protein L10</fullName>
    </alternativeName>
</protein>
<feature type="chain" id="PRO_0000234896" description="Large ribosomal subunit protein uL10">
    <location>
        <begin position="1"/>
        <end position="175"/>
    </location>
</feature>
<organism>
    <name type="scientific">Synechococcus sp. (strain CC9605)</name>
    <dbReference type="NCBI Taxonomy" id="110662"/>
    <lineage>
        <taxon>Bacteria</taxon>
        <taxon>Bacillati</taxon>
        <taxon>Cyanobacteriota</taxon>
        <taxon>Cyanophyceae</taxon>
        <taxon>Synechococcales</taxon>
        <taxon>Synechococcaceae</taxon>
        <taxon>Synechococcus</taxon>
    </lineage>
</organism>
<proteinExistence type="inferred from homology"/>
<accession>Q3AGT1</accession>
<evidence type="ECO:0000255" key="1">
    <source>
        <dbReference type="HAMAP-Rule" id="MF_00362"/>
    </source>
</evidence>
<evidence type="ECO:0000305" key="2"/>
<name>RL10_SYNSC</name>
<comment type="function">
    <text evidence="1">Forms part of the ribosomal stalk, playing a central role in the interaction of the ribosome with GTP-bound translation factors.</text>
</comment>
<comment type="subunit">
    <text evidence="1">Part of the ribosomal stalk of the 50S ribosomal subunit. The N-terminus interacts with L11 and the large rRNA to form the base of the stalk. The C-terminus forms an elongated spine to which L12 dimers bind in a sequential fashion forming a multimeric L10(L12)X complex.</text>
</comment>
<comment type="similarity">
    <text evidence="1">Belongs to the universal ribosomal protein uL10 family.</text>
</comment>
<reference key="1">
    <citation type="submission" date="2005-07" db="EMBL/GenBank/DDBJ databases">
        <title>Complete sequence of Synechococcus sp. CC9605.</title>
        <authorList>
            <consortium name="US DOE Joint Genome Institute"/>
            <person name="Copeland A."/>
            <person name="Lucas S."/>
            <person name="Lapidus A."/>
            <person name="Barry K."/>
            <person name="Detter J.C."/>
            <person name="Glavina T."/>
            <person name="Hammon N."/>
            <person name="Israni S."/>
            <person name="Pitluck S."/>
            <person name="Schmutz J."/>
            <person name="Martinez M."/>
            <person name="Larimer F."/>
            <person name="Land M."/>
            <person name="Kyrpides N."/>
            <person name="Ivanova N."/>
            <person name="Richardson P."/>
        </authorList>
    </citation>
    <scope>NUCLEOTIDE SEQUENCE [LARGE SCALE GENOMIC DNA]</scope>
    <source>
        <strain>CC9605</strain>
    </source>
</reference>
<gene>
    <name evidence="1" type="primary">rplJ</name>
    <name evidence="1" type="synonym">rpl10</name>
    <name type="ordered locus">Syncc9605_2469</name>
</gene>
<keyword id="KW-0687">Ribonucleoprotein</keyword>
<keyword id="KW-0689">Ribosomal protein</keyword>
<keyword id="KW-0694">RNA-binding</keyword>
<keyword id="KW-0699">rRNA-binding</keyword>
<dbReference type="EMBL" id="CP000110">
    <property type="protein sequence ID" value="ABB36201.1"/>
    <property type="molecule type" value="Genomic_DNA"/>
</dbReference>
<dbReference type="RefSeq" id="WP_006851480.1">
    <property type="nucleotide sequence ID" value="NC_007516.1"/>
</dbReference>
<dbReference type="SMR" id="Q3AGT1"/>
<dbReference type="STRING" id="110662.Syncc9605_2469"/>
<dbReference type="KEGG" id="syd:Syncc9605_2469"/>
<dbReference type="eggNOG" id="COG0244">
    <property type="taxonomic scope" value="Bacteria"/>
</dbReference>
<dbReference type="HOGENOM" id="CLU_092227_1_1_3"/>
<dbReference type="OrthoDB" id="9808307at2"/>
<dbReference type="GO" id="GO:1990904">
    <property type="term" value="C:ribonucleoprotein complex"/>
    <property type="evidence" value="ECO:0007669"/>
    <property type="project" value="UniProtKB-KW"/>
</dbReference>
<dbReference type="GO" id="GO:0005840">
    <property type="term" value="C:ribosome"/>
    <property type="evidence" value="ECO:0007669"/>
    <property type="project" value="UniProtKB-KW"/>
</dbReference>
<dbReference type="GO" id="GO:0070180">
    <property type="term" value="F:large ribosomal subunit rRNA binding"/>
    <property type="evidence" value="ECO:0007669"/>
    <property type="project" value="UniProtKB-UniRule"/>
</dbReference>
<dbReference type="GO" id="GO:0006412">
    <property type="term" value="P:translation"/>
    <property type="evidence" value="ECO:0007669"/>
    <property type="project" value="UniProtKB-UniRule"/>
</dbReference>
<dbReference type="CDD" id="cd05797">
    <property type="entry name" value="Ribosomal_L10"/>
    <property type="match status" value="1"/>
</dbReference>
<dbReference type="Gene3D" id="3.30.70.1730">
    <property type="match status" value="1"/>
</dbReference>
<dbReference type="Gene3D" id="6.10.250.290">
    <property type="match status" value="1"/>
</dbReference>
<dbReference type="HAMAP" id="MF_00362">
    <property type="entry name" value="Ribosomal_uL10"/>
    <property type="match status" value="1"/>
</dbReference>
<dbReference type="InterPro" id="IPR001790">
    <property type="entry name" value="Ribosomal_uL10"/>
</dbReference>
<dbReference type="InterPro" id="IPR043141">
    <property type="entry name" value="Ribosomal_uL10-like_sf"/>
</dbReference>
<dbReference type="InterPro" id="IPR022973">
    <property type="entry name" value="Ribosomal_uL10_bac"/>
</dbReference>
<dbReference type="InterPro" id="IPR047865">
    <property type="entry name" value="Ribosomal_uL10_bac_type"/>
</dbReference>
<dbReference type="NCBIfam" id="NF000955">
    <property type="entry name" value="PRK00099.1-1"/>
    <property type="match status" value="1"/>
</dbReference>
<dbReference type="PANTHER" id="PTHR11560">
    <property type="entry name" value="39S RIBOSOMAL PROTEIN L10, MITOCHONDRIAL"/>
    <property type="match status" value="1"/>
</dbReference>
<dbReference type="Pfam" id="PF00466">
    <property type="entry name" value="Ribosomal_L10"/>
    <property type="match status" value="1"/>
</dbReference>
<dbReference type="SUPFAM" id="SSF160369">
    <property type="entry name" value="Ribosomal protein L10-like"/>
    <property type="match status" value="1"/>
</dbReference>